<gene>
    <name evidence="4" type="ordered locus">At5g56730</name>
    <name evidence="5" type="ORF">MIK19.18</name>
</gene>
<evidence type="ECO:0000250" key="1"/>
<evidence type="ECO:0000255" key="2">
    <source>
        <dbReference type="PROSITE-ProRule" id="PRU10096"/>
    </source>
</evidence>
<evidence type="ECO:0000305" key="3"/>
<evidence type="ECO:0000312" key="4">
    <source>
        <dbReference type="Araport" id="AT5G56730"/>
    </source>
</evidence>
<evidence type="ECO:0000312" key="5">
    <source>
        <dbReference type="EMBL" id="BAB09891.1"/>
    </source>
</evidence>
<evidence type="ECO:0007744" key="6">
    <source>
    </source>
</evidence>
<sequence length="956" mass="107981">MDLIAGESSKVLRKQGFRSLKLMSVDMEQELGNELEPFGADYGRLDNGLIYYVRRNSKPRMRAALALAVKVGSVLEEEDQRGVAHIVEHLAFSATTRYTNHDIVKFLESIGAEFGPCQNAMTTADETIYELFVPVDKPELLSQAISILAEFSSEIRVSKEDLEKERGAVMEEYRGNRNATGRMQDSHWQLMMEGSKYAERLPIGLEKVIRSVPAATVKQFYQKWYHLCNMAVVAVGDFPDTKTVVDLIKTHFEDKRSSSEPPQIPVFPVPSHEETRFSCFVESEAAGSAVMISYKMPVSDLKTVKDYRDMLAESMFLHALNQRLFKISRRKDPPFFACSVAADVLVARVRLHGFSEREISVVRALMMSEIESAYLERDQVQSTSLRDEYIQHFLHKEPVIGIEYEAQLQKTLLPQISASDVSRYSEKLRTSCGCVIKSMEPKSAATIDHMRNVVSKVNSLEEEKMIAPWDEENIPEEIVSEKPTPGDITHQLEYPEVGVTELTLSNGMQVCYKSTDFLDDQVLFTGFSYGGLSELPESDYISCSMGSTIAGEIGMFGYKPSVLMDMLADLETALQLVYQLFTTNVMPQEEEVGIVMQMAEESVRARERDPYTVFANRVKELNYGNSYFFRPIRISELRKVDPLKACEYFNSCFRDPSTFTVVIVGNLDPTIALPLILQYLGGIPKPPQPVLNFNRDDLKGLPFTFPTKITKEFVRSPMVEAQCSVQLCFPVQLTNGTMIEEIHCIGFLGKLLETKIIQFLRFEHGQIYSAEVSVFLGGNKPSRTADLRGDISVNFSCDPEISSKLVDLALEEIVRLQKEGPSQEDISAILEIEQRAHENGMQENYYWLDRIIRGYQSRVYAGDLGASCKILEEGRLRMRESLAPQTAQAALQRILPHPCKKQYTAVILMPQRSRFGFLSSIFSSRSEGPYIRDTKILAGIAGLGVVVFGIWRYSRK</sequence>
<organism>
    <name type="scientific">Arabidopsis thaliana</name>
    <name type="common">Mouse-ear cress</name>
    <dbReference type="NCBI Taxonomy" id="3702"/>
    <lineage>
        <taxon>Eukaryota</taxon>
        <taxon>Viridiplantae</taxon>
        <taxon>Streptophyta</taxon>
        <taxon>Embryophyta</taxon>
        <taxon>Tracheophyta</taxon>
        <taxon>Spermatophyta</taxon>
        <taxon>Magnoliopsida</taxon>
        <taxon>eudicotyledons</taxon>
        <taxon>Gunneridae</taxon>
        <taxon>Pentapetalae</taxon>
        <taxon>rosids</taxon>
        <taxon>malvids</taxon>
        <taxon>Brassicales</taxon>
        <taxon>Brassicaceae</taxon>
        <taxon>Camelineae</taxon>
        <taxon>Arabidopsis</taxon>
    </lineage>
</organism>
<reference key="1">
    <citation type="journal article" date="1998" name="DNA Res.">
        <title>Structural analysis of Arabidopsis thaliana chromosome 5. VI. Sequence features of the regions of 1,367,185 bp covered by 19 physically assigned P1 and TAC clones.</title>
        <authorList>
            <person name="Kotani H."/>
            <person name="Nakamura Y."/>
            <person name="Sato S."/>
            <person name="Asamizu E."/>
            <person name="Kaneko T."/>
            <person name="Miyajima N."/>
            <person name="Tabata S."/>
        </authorList>
    </citation>
    <scope>NUCLEOTIDE SEQUENCE [LARGE SCALE GENOMIC DNA]</scope>
    <source>
        <strain>cv. Columbia</strain>
    </source>
</reference>
<reference key="2">
    <citation type="journal article" date="2017" name="Plant J.">
        <title>Araport11: a complete reannotation of the Arabidopsis thaliana reference genome.</title>
        <authorList>
            <person name="Cheng C.Y."/>
            <person name="Krishnakumar V."/>
            <person name="Chan A.P."/>
            <person name="Thibaud-Nissen F."/>
            <person name="Schobel S."/>
            <person name="Town C.D."/>
        </authorList>
    </citation>
    <scope>GENOME REANNOTATION</scope>
    <source>
        <strain>cv. Columbia</strain>
    </source>
</reference>
<reference key="3">
    <citation type="journal article" date="2012" name="Mol. Cell. Proteomics">
        <title>Comparative large-scale characterisation of plant vs. mammal proteins reveals similar and idiosyncratic N-alpha acetylation features.</title>
        <authorList>
            <person name="Bienvenut W.V."/>
            <person name="Sumpton D."/>
            <person name="Martinez A."/>
            <person name="Lilla S."/>
            <person name="Espagne C."/>
            <person name="Meinnel T."/>
            <person name="Giglione C."/>
        </authorList>
    </citation>
    <scope>ACETYLATION [LARGE SCALE ANALYSIS] AT MET-1</scope>
    <scope>IDENTIFICATION BY MASS SPECTROMETRY [LARGE SCALE ANALYSIS]</scope>
</reference>
<keyword id="KW-0007">Acetylation</keyword>
<keyword id="KW-0378">Hydrolase</keyword>
<keyword id="KW-0479">Metal-binding</keyword>
<keyword id="KW-0482">Metalloprotease</keyword>
<keyword id="KW-0645">Protease</keyword>
<keyword id="KW-1185">Reference proteome</keyword>
<keyword id="KW-0862">Zinc</keyword>
<accession>Q9FJT9</accession>
<feature type="chain" id="PRO_0000435731" description="Zinc protease PQQL-like">
    <location>
        <begin position="1"/>
        <end position="956"/>
    </location>
</feature>
<feature type="active site" description="Proton acceptor" evidence="2">
    <location>
        <position position="88"/>
    </location>
</feature>
<feature type="active site" evidence="3">
    <location>
        <position position="165"/>
    </location>
</feature>
<feature type="binding site" evidence="2">
    <location>
        <position position="85"/>
    </location>
    <ligand>
        <name>Zn(2+)</name>
        <dbReference type="ChEBI" id="CHEBI:29105"/>
    </ligand>
</feature>
<feature type="binding site" evidence="2">
    <location>
        <position position="89"/>
    </location>
    <ligand>
        <name>Zn(2+)</name>
        <dbReference type="ChEBI" id="CHEBI:29105"/>
    </ligand>
</feature>
<feature type="binding site" evidence="3">
    <location>
        <position position="172"/>
    </location>
    <ligand>
        <name>Zn(2+)</name>
        <dbReference type="ChEBI" id="CHEBI:29105"/>
    </ligand>
</feature>
<feature type="modified residue" description="N-acetylmethionine" evidence="6">
    <location>
        <position position="1"/>
    </location>
</feature>
<proteinExistence type="evidence at protein level"/>
<dbReference type="EC" id="3.4.24.-" evidence="3"/>
<dbReference type="EMBL" id="AB013392">
    <property type="protein sequence ID" value="BAB09891.1"/>
    <property type="molecule type" value="Genomic_DNA"/>
</dbReference>
<dbReference type="EMBL" id="CP002688">
    <property type="status" value="NOT_ANNOTATED_CDS"/>
    <property type="molecule type" value="Genomic_DNA"/>
</dbReference>
<dbReference type="SMR" id="Q9FJT9"/>
<dbReference type="STRING" id="3702.Q9FJT9"/>
<dbReference type="MEROPS" id="M16.A03"/>
<dbReference type="GlyGen" id="Q9FJT9">
    <property type="glycosylation" value="1 site"/>
</dbReference>
<dbReference type="iPTMnet" id="Q9FJT9"/>
<dbReference type="PaxDb" id="3702-AT5G56730.1"/>
<dbReference type="Araport" id="AT5G56730"/>
<dbReference type="TAIR" id="AT5G56730"/>
<dbReference type="eggNOG" id="KOG0959">
    <property type="taxonomic scope" value="Eukaryota"/>
</dbReference>
<dbReference type="HOGENOM" id="CLU_008156_0_0_1"/>
<dbReference type="InParanoid" id="Q9FJT9"/>
<dbReference type="PhylomeDB" id="Q9FJT9"/>
<dbReference type="PRO" id="PR:Q9FJT9"/>
<dbReference type="Proteomes" id="UP000006548">
    <property type="component" value="Chromosome 5"/>
</dbReference>
<dbReference type="ExpressionAtlas" id="Q9FJT9">
    <property type="expression patterns" value="baseline and differential"/>
</dbReference>
<dbReference type="GO" id="GO:0009507">
    <property type="term" value="C:chloroplast"/>
    <property type="evidence" value="ECO:0007005"/>
    <property type="project" value="TAIR"/>
</dbReference>
<dbReference type="GO" id="GO:0009536">
    <property type="term" value="C:plastid"/>
    <property type="evidence" value="ECO:0007005"/>
    <property type="project" value="TAIR"/>
</dbReference>
<dbReference type="GO" id="GO:0046872">
    <property type="term" value="F:metal ion binding"/>
    <property type="evidence" value="ECO:0007669"/>
    <property type="project" value="UniProtKB-KW"/>
</dbReference>
<dbReference type="GO" id="GO:0004222">
    <property type="term" value="F:metalloendopeptidase activity"/>
    <property type="evidence" value="ECO:0007669"/>
    <property type="project" value="InterPro"/>
</dbReference>
<dbReference type="GO" id="GO:0006508">
    <property type="term" value="P:proteolysis"/>
    <property type="evidence" value="ECO:0007669"/>
    <property type="project" value="UniProtKB-KW"/>
</dbReference>
<dbReference type="FunFam" id="3.30.830.10:FF:000115">
    <property type="entry name" value="Zinc protease PQQL-like"/>
    <property type="match status" value="1"/>
</dbReference>
<dbReference type="FunFam" id="3.30.830.10:FF:000131">
    <property type="entry name" value="Zinc protease PQQL-like"/>
    <property type="match status" value="1"/>
</dbReference>
<dbReference type="Gene3D" id="3.30.830.10">
    <property type="entry name" value="Metalloenzyme, LuxS/M16 peptidase-like"/>
    <property type="match status" value="3"/>
</dbReference>
<dbReference type="InterPro" id="IPR011249">
    <property type="entry name" value="Metalloenz_LuxS/M16"/>
</dbReference>
<dbReference type="InterPro" id="IPR011765">
    <property type="entry name" value="Pept_M16_N"/>
</dbReference>
<dbReference type="InterPro" id="IPR001431">
    <property type="entry name" value="Pept_M16_Zn_BS"/>
</dbReference>
<dbReference type="InterPro" id="IPR050626">
    <property type="entry name" value="Peptidase_M16"/>
</dbReference>
<dbReference type="InterPro" id="IPR007863">
    <property type="entry name" value="Peptidase_M16_C"/>
</dbReference>
<dbReference type="PANTHER" id="PTHR43690">
    <property type="entry name" value="NARDILYSIN"/>
    <property type="match status" value="1"/>
</dbReference>
<dbReference type="PANTHER" id="PTHR43690:SF34">
    <property type="entry name" value="ZINC PROTEASE PQQL-LIKE"/>
    <property type="match status" value="1"/>
</dbReference>
<dbReference type="Pfam" id="PF00675">
    <property type="entry name" value="Peptidase_M16"/>
    <property type="match status" value="1"/>
</dbReference>
<dbReference type="Pfam" id="PF05193">
    <property type="entry name" value="Peptidase_M16_C"/>
    <property type="match status" value="2"/>
</dbReference>
<dbReference type="SUPFAM" id="SSF63411">
    <property type="entry name" value="LuxS/MPP-like metallohydrolase"/>
    <property type="match status" value="2"/>
</dbReference>
<dbReference type="PROSITE" id="PS00143">
    <property type="entry name" value="INSULINASE"/>
    <property type="match status" value="1"/>
</dbReference>
<comment type="cofactor">
    <cofactor evidence="1">
        <name>Zn(2+)</name>
        <dbReference type="ChEBI" id="CHEBI:29105"/>
    </cofactor>
    <text evidence="1">Binds 1 zinc ion per subunit.</text>
</comment>
<comment type="similarity">
    <text evidence="3">Belongs to the peptidase M16 family.</text>
</comment>
<protein>
    <recommendedName>
        <fullName evidence="3">Zinc protease PQQL-like</fullName>
        <ecNumber evidence="3">3.4.24.-</ecNumber>
    </recommendedName>
</protein>
<name>PQQL_ARATH</name>